<organism>
    <name type="scientific">Burkholderia pseudomallei (strain K96243)</name>
    <dbReference type="NCBI Taxonomy" id="272560"/>
    <lineage>
        <taxon>Bacteria</taxon>
        <taxon>Pseudomonadati</taxon>
        <taxon>Pseudomonadota</taxon>
        <taxon>Betaproteobacteria</taxon>
        <taxon>Burkholderiales</taxon>
        <taxon>Burkholderiaceae</taxon>
        <taxon>Burkholderia</taxon>
        <taxon>pseudomallei group</taxon>
    </lineage>
</organism>
<proteinExistence type="inferred from homology"/>
<comment type="function">
    <text evidence="1">Catalyzes the transfer of a methyl group from 5-methyltetrahydrofolate to homocysteine resulting in methionine formation.</text>
</comment>
<comment type="catalytic activity">
    <reaction evidence="1">
        <text>5-methyltetrahydropteroyltri-L-glutamate + L-homocysteine = tetrahydropteroyltri-L-glutamate + L-methionine</text>
        <dbReference type="Rhea" id="RHEA:21196"/>
        <dbReference type="ChEBI" id="CHEBI:57844"/>
        <dbReference type="ChEBI" id="CHEBI:58140"/>
        <dbReference type="ChEBI" id="CHEBI:58199"/>
        <dbReference type="ChEBI" id="CHEBI:58207"/>
        <dbReference type="EC" id="2.1.1.14"/>
    </reaction>
</comment>
<comment type="cofactor">
    <cofactor evidence="1">
        <name>Zn(2+)</name>
        <dbReference type="ChEBI" id="CHEBI:29105"/>
    </cofactor>
    <text evidence="1">Binds 1 zinc ion per subunit.</text>
</comment>
<comment type="pathway">
    <text evidence="1">Amino-acid biosynthesis; L-methionine biosynthesis via de novo pathway; L-methionine from L-homocysteine (MetE route): step 1/1.</text>
</comment>
<comment type="similarity">
    <text evidence="1">Belongs to the vitamin-B12 independent methionine synthase family.</text>
</comment>
<sequence length="764" mass="84451">MTTAHILGFPRIGAQRELKFALERYWRDGASADAERALVDTGRALRAEHWRIERDAGLDCVTVGDFAWYDHVLTTLAHVGGLPRRFGFDARALTLADYFAAARGNAAQPAMEMTKWFDTNYHYLVPEYSPATTFGPGVEWLFDEVREARALGYRAKAALVGPLTLLWLGKARDGLVERLALLPRLVPAYRALLARLREAGVDWVQIEEPIFSLDLPDAWRDAARPTYEALAPGAPKLLVATYFDDASEHAALLKALPVAGLHIDLVRADAQLDAFVADYPADKVLSCGIVDGRNVWRNDLDRSLARLAPVRDALGERLWVATSCSLLHVPVDLAHEPRLDEELKTWLAFAAQKTREVAALRDALVKGRAAVAAEFDDAAAAAAARRTSARIHNPLVKRRVAALTDADARRASAYSVRAAAQRARFGLPLLPTTTIGSFPQTPEIRRARAAFKQGVLDHLGYLEAMREQVRIAIDKQLAYGLDVLVHGEAERNDMVEYFGELLWGFAITSNGWVQSYGSRCVKPPLVYGDVYLPEPMTVGWASYAQSLSAKPVKGMLTGPVTMLQWSFVRDDQPRATTALQIALALRQETLDLEKAGIGMIQIDEPALREGLPLKARERAAYLDWAVRAFGIAASGVADDTQIHTHMCYSEFGDILPSIAALDADVISIETTRSNMELLDAFETFDYPNEIGPGVYDIHSPRVPDADEIERLILLALERIPAQRLWVNPDCGLKTREWRQVDAALAAMVDAAKRVRQKVEEEAPA</sequence>
<evidence type="ECO:0000255" key="1">
    <source>
        <dbReference type="HAMAP-Rule" id="MF_00172"/>
    </source>
</evidence>
<gene>
    <name evidence="1" type="primary">metE</name>
    <name type="ordered locus">BPSL2545</name>
</gene>
<protein>
    <recommendedName>
        <fullName evidence="1">5-methyltetrahydropteroyltriglutamate--homocysteine methyltransferase</fullName>
        <ecNumber evidence="1">2.1.1.14</ecNumber>
    </recommendedName>
    <alternativeName>
        <fullName evidence="1">Cobalamin-independent methionine synthase</fullName>
    </alternativeName>
    <alternativeName>
        <fullName evidence="1">Methionine synthase, vitamin-B12 independent isozyme</fullName>
    </alternativeName>
</protein>
<dbReference type="EC" id="2.1.1.14" evidence="1"/>
<dbReference type="EMBL" id="BX571965">
    <property type="protein sequence ID" value="CAH36552.1"/>
    <property type="molecule type" value="Genomic_DNA"/>
</dbReference>
<dbReference type="RefSeq" id="WP_009938401.1">
    <property type="nucleotide sequence ID" value="NC_006350.1"/>
</dbReference>
<dbReference type="RefSeq" id="YP_109141.1">
    <property type="nucleotide sequence ID" value="NC_006350.1"/>
</dbReference>
<dbReference type="SMR" id="Q63RX6"/>
<dbReference type="STRING" id="272560.BPSL2545"/>
<dbReference type="KEGG" id="bps:BPSL2545"/>
<dbReference type="PATRIC" id="fig|272560.51.peg.2827"/>
<dbReference type="eggNOG" id="COG0620">
    <property type="taxonomic scope" value="Bacteria"/>
</dbReference>
<dbReference type="UniPathway" id="UPA00051">
    <property type="reaction ID" value="UER00082"/>
</dbReference>
<dbReference type="Proteomes" id="UP000000605">
    <property type="component" value="Chromosome 1"/>
</dbReference>
<dbReference type="GO" id="GO:0003871">
    <property type="term" value="F:5-methyltetrahydropteroyltriglutamate-homocysteine S-methyltransferase activity"/>
    <property type="evidence" value="ECO:0007669"/>
    <property type="project" value="UniProtKB-UniRule"/>
</dbReference>
<dbReference type="GO" id="GO:0008270">
    <property type="term" value="F:zinc ion binding"/>
    <property type="evidence" value="ECO:0007669"/>
    <property type="project" value="InterPro"/>
</dbReference>
<dbReference type="GO" id="GO:0009086">
    <property type="term" value="P:methionine biosynthetic process"/>
    <property type="evidence" value="ECO:0007669"/>
    <property type="project" value="UniProtKB-UniRule"/>
</dbReference>
<dbReference type="GO" id="GO:0032259">
    <property type="term" value="P:methylation"/>
    <property type="evidence" value="ECO:0007669"/>
    <property type="project" value="UniProtKB-KW"/>
</dbReference>
<dbReference type="CDD" id="cd03311">
    <property type="entry name" value="CIMS_C_terminal_like"/>
    <property type="match status" value="1"/>
</dbReference>
<dbReference type="CDD" id="cd03312">
    <property type="entry name" value="CIMS_N_terminal_like"/>
    <property type="match status" value="1"/>
</dbReference>
<dbReference type="Gene3D" id="3.20.20.210">
    <property type="match status" value="2"/>
</dbReference>
<dbReference type="HAMAP" id="MF_00172">
    <property type="entry name" value="Meth_synth"/>
    <property type="match status" value="1"/>
</dbReference>
<dbReference type="InterPro" id="IPR013215">
    <property type="entry name" value="Cbl-indep_Met_Synth_N"/>
</dbReference>
<dbReference type="InterPro" id="IPR006276">
    <property type="entry name" value="Cobalamin-indep_Met_synthase"/>
</dbReference>
<dbReference type="InterPro" id="IPR002629">
    <property type="entry name" value="Met_Synth_C/arc"/>
</dbReference>
<dbReference type="InterPro" id="IPR038071">
    <property type="entry name" value="UROD/MetE-like_sf"/>
</dbReference>
<dbReference type="NCBIfam" id="TIGR01371">
    <property type="entry name" value="met_syn_B12ind"/>
    <property type="match status" value="1"/>
</dbReference>
<dbReference type="NCBIfam" id="NF003556">
    <property type="entry name" value="PRK05222.1"/>
    <property type="match status" value="1"/>
</dbReference>
<dbReference type="PANTHER" id="PTHR30519">
    <property type="entry name" value="5-METHYLTETRAHYDROPTEROYLTRIGLUTAMATE--HOMOCYSTEINE METHYLTRANSFERASE"/>
    <property type="match status" value="1"/>
</dbReference>
<dbReference type="Pfam" id="PF08267">
    <property type="entry name" value="Meth_synt_1"/>
    <property type="match status" value="1"/>
</dbReference>
<dbReference type="Pfam" id="PF01717">
    <property type="entry name" value="Meth_synt_2"/>
    <property type="match status" value="1"/>
</dbReference>
<dbReference type="PIRSF" id="PIRSF000382">
    <property type="entry name" value="MeTrfase_B12_ind"/>
    <property type="match status" value="1"/>
</dbReference>
<dbReference type="SUPFAM" id="SSF51726">
    <property type="entry name" value="UROD/MetE-like"/>
    <property type="match status" value="2"/>
</dbReference>
<feature type="chain" id="PRO_1000071607" description="5-methyltetrahydropteroyltriglutamate--homocysteine methyltransferase">
    <location>
        <begin position="1"/>
        <end position="764"/>
    </location>
</feature>
<feature type="active site" description="Proton donor" evidence="1">
    <location>
        <position position="698"/>
    </location>
</feature>
<feature type="binding site" evidence="1">
    <location>
        <begin position="16"/>
        <end position="19"/>
    </location>
    <ligand>
        <name>5-methyltetrahydropteroyltri-L-glutamate</name>
        <dbReference type="ChEBI" id="CHEBI:58207"/>
    </ligand>
</feature>
<feature type="binding site" evidence="1">
    <location>
        <position position="115"/>
    </location>
    <ligand>
        <name>5-methyltetrahydropteroyltri-L-glutamate</name>
        <dbReference type="ChEBI" id="CHEBI:58207"/>
    </ligand>
</feature>
<feature type="binding site" evidence="1">
    <location>
        <begin position="435"/>
        <end position="437"/>
    </location>
    <ligand>
        <name>L-homocysteine</name>
        <dbReference type="ChEBI" id="CHEBI:58199"/>
    </ligand>
</feature>
<feature type="binding site" evidence="1">
    <location>
        <begin position="435"/>
        <end position="437"/>
    </location>
    <ligand>
        <name>L-methionine</name>
        <dbReference type="ChEBI" id="CHEBI:57844"/>
    </ligand>
</feature>
<feature type="binding site" evidence="1">
    <location>
        <position position="488"/>
    </location>
    <ligand>
        <name>L-homocysteine</name>
        <dbReference type="ChEBI" id="CHEBI:58199"/>
    </ligand>
</feature>
<feature type="binding site" evidence="1">
    <location>
        <position position="488"/>
    </location>
    <ligand>
        <name>L-methionine</name>
        <dbReference type="ChEBI" id="CHEBI:57844"/>
    </ligand>
</feature>
<feature type="binding site" evidence="1">
    <location>
        <begin position="519"/>
        <end position="520"/>
    </location>
    <ligand>
        <name>5-methyltetrahydropteroyltri-L-glutamate</name>
        <dbReference type="ChEBI" id="CHEBI:58207"/>
    </ligand>
</feature>
<feature type="binding site" evidence="1">
    <location>
        <position position="565"/>
    </location>
    <ligand>
        <name>5-methyltetrahydropteroyltri-L-glutamate</name>
        <dbReference type="ChEBI" id="CHEBI:58207"/>
    </ligand>
</feature>
<feature type="binding site" evidence="1">
    <location>
        <position position="603"/>
    </location>
    <ligand>
        <name>L-homocysteine</name>
        <dbReference type="ChEBI" id="CHEBI:58199"/>
    </ligand>
</feature>
<feature type="binding site" evidence="1">
    <location>
        <position position="603"/>
    </location>
    <ligand>
        <name>L-methionine</name>
        <dbReference type="ChEBI" id="CHEBI:57844"/>
    </ligand>
</feature>
<feature type="binding site" evidence="1">
    <location>
        <position position="609"/>
    </location>
    <ligand>
        <name>5-methyltetrahydropteroyltri-L-glutamate</name>
        <dbReference type="ChEBI" id="CHEBI:58207"/>
    </ligand>
</feature>
<feature type="binding site" evidence="1">
    <location>
        <position position="645"/>
    </location>
    <ligand>
        <name>Zn(2+)</name>
        <dbReference type="ChEBI" id="CHEBI:29105"/>
        <note>catalytic</note>
    </ligand>
</feature>
<feature type="binding site" evidence="1">
    <location>
        <position position="647"/>
    </location>
    <ligand>
        <name>Zn(2+)</name>
        <dbReference type="ChEBI" id="CHEBI:29105"/>
        <note>catalytic</note>
    </ligand>
</feature>
<feature type="binding site" evidence="1">
    <location>
        <position position="669"/>
    </location>
    <ligand>
        <name>Zn(2+)</name>
        <dbReference type="ChEBI" id="CHEBI:29105"/>
        <note>catalytic</note>
    </ligand>
</feature>
<feature type="binding site" evidence="1">
    <location>
        <position position="730"/>
    </location>
    <ligand>
        <name>Zn(2+)</name>
        <dbReference type="ChEBI" id="CHEBI:29105"/>
        <note>catalytic</note>
    </ligand>
</feature>
<reference key="1">
    <citation type="journal article" date="2004" name="Proc. Natl. Acad. Sci. U.S.A.">
        <title>Genomic plasticity of the causative agent of melioidosis, Burkholderia pseudomallei.</title>
        <authorList>
            <person name="Holden M.T.G."/>
            <person name="Titball R.W."/>
            <person name="Peacock S.J."/>
            <person name="Cerdeno-Tarraga A.-M."/>
            <person name="Atkins T."/>
            <person name="Crossman L.C."/>
            <person name="Pitt T."/>
            <person name="Churcher C."/>
            <person name="Mungall K.L."/>
            <person name="Bentley S.D."/>
            <person name="Sebaihia M."/>
            <person name="Thomson N.R."/>
            <person name="Bason N."/>
            <person name="Beacham I.R."/>
            <person name="Brooks K."/>
            <person name="Brown K.A."/>
            <person name="Brown N.F."/>
            <person name="Challis G.L."/>
            <person name="Cherevach I."/>
            <person name="Chillingworth T."/>
            <person name="Cronin A."/>
            <person name="Crossett B."/>
            <person name="Davis P."/>
            <person name="DeShazer D."/>
            <person name="Feltwell T."/>
            <person name="Fraser A."/>
            <person name="Hance Z."/>
            <person name="Hauser H."/>
            <person name="Holroyd S."/>
            <person name="Jagels K."/>
            <person name="Keith K.E."/>
            <person name="Maddison M."/>
            <person name="Moule S."/>
            <person name="Price C."/>
            <person name="Quail M.A."/>
            <person name="Rabbinowitsch E."/>
            <person name="Rutherford K."/>
            <person name="Sanders M."/>
            <person name="Simmonds M."/>
            <person name="Songsivilai S."/>
            <person name="Stevens K."/>
            <person name="Tumapa S."/>
            <person name="Vesaratchavest M."/>
            <person name="Whitehead S."/>
            <person name="Yeats C."/>
            <person name="Barrell B.G."/>
            <person name="Oyston P.C.F."/>
            <person name="Parkhill J."/>
        </authorList>
    </citation>
    <scope>NUCLEOTIDE SEQUENCE [LARGE SCALE GENOMIC DNA]</scope>
    <source>
        <strain>K96243</strain>
    </source>
</reference>
<keyword id="KW-0028">Amino-acid biosynthesis</keyword>
<keyword id="KW-0479">Metal-binding</keyword>
<keyword id="KW-0486">Methionine biosynthesis</keyword>
<keyword id="KW-0489">Methyltransferase</keyword>
<keyword id="KW-1185">Reference proteome</keyword>
<keyword id="KW-0677">Repeat</keyword>
<keyword id="KW-0808">Transferase</keyword>
<keyword id="KW-0862">Zinc</keyword>
<name>METE_BURPS</name>
<accession>Q63RX6</accession>